<evidence type="ECO:0000255" key="1"/>
<evidence type="ECO:0000305" key="2"/>
<comment type="subcellular location">
    <subcellularLocation>
        <location evidence="2">Cell membrane</location>
        <topology evidence="2">Multi-pass membrane protein</topology>
    </subcellularLocation>
</comment>
<comment type="similarity">
    <text evidence="2">To M.pneumoniae MPN_095 and MPN_096.</text>
</comment>
<proteinExistence type="predicted"/>
<name>Y308_MYCPN</name>
<sequence>MKQQKPKISFIAAMLIVIGSSIGAGIFFKSSTVLENSQASLVLAIFNWLVASVAVIAMALALIEIASVRNDNLSIISWVKVFNRRWLYHGCKNFMTYLYLPLTFFFMPLYFICSIQDGFRGLLGLETGAHFNTSVDWLIWLALALIITTYFLTIPPLYAKVGNIQNMVVSAVKFIPLVFVPIIGFIVAGTGNGELKNVKALVQPPQINGATASFTQLVQAGYGITRFTGIGAGMGSFISIAAIFFAYDGFYVTAGLQSEMREPKKTPWALFLGLLITTLFYLILAVALSINGGLFSGMEESMGKLFNNKRAGQIVFGVVNLMIGIGVLGIINGFALWAPRFVEDLLAQGDLPFWKQVQGRLNPNKPVVGVIYCLVLSLTVQVLFTVIGALAYLPTVADYKNYVNTEIDKLNSMQWLYSFSDLMATWTSLFTFAFIACAIFGAIVNRKTKKITIANPKRYFLPAAWIAVVVNCISVFVTIIEPFINLFLLFGYDETVAHTVLGNDFIELNELVIGRVMLIVVLVFFAIISFLPVYVEDQYHKRKFGSLANYQQYVQQHLAHSTING</sequence>
<protein>
    <recommendedName>
        <fullName>Uncharacterized protein MPN_308</fullName>
    </recommendedName>
</protein>
<dbReference type="EMBL" id="U00089">
    <property type="protein sequence ID" value="AAB96176.1"/>
    <property type="molecule type" value="Genomic_DNA"/>
</dbReference>
<dbReference type="EMBL" id="U59896">
    <property type="protein sequence ID" value="AAB52525.1"/>
    <property type="molecule type" value="Genomic_DNA"/>
</dbReference>
<dbReference type="PIR" id="S73854">
    <property type="entry name" value="S73854"/>
</dbReference>
<dbReference type="RefSeq" id="NP_109996.1">
    <property type="nucleotide sequence ID" value="NC_000912.1"/>
</dbReference>
<dbReference type="RefSeq" id="WP_010874664.1">
    <property type="nucleotide sequence ID" value="NC_000912.1"/>
</dbReference>
<dbReference type="STRING" id="272634.MPN_308"/>
<dbReference type="EnsemblBacteria" id="AAB96176">
    <property type="protein sequence ID" value="AAB96176"/>
    <property type="gene ID" value="MPN_308"/>
</dbReference>
<dbReference type="KEGG" id="mpn:MPN_308"/>
<dbReference type="PATRIC" id="fig|272634.6.peg.332"/>
<dbReference type="HOGENOM" id="CLU_024309_0_0_14"/>
<dbReference type="OrthoDB" id="396925at2"/>
<dbReference type="BioCyc" id="MPNE272634:G1GJ3-489-MONOMER"/>
<dbReference type="Proteomes" id="UP000000808">
    <property type="component" value="Chromosome"/>
</dbReference>
<dbReference type="GO" id="GO:0005886">
    <property type="term" value="C:plasma membrane"/>
    <property type="evidence" value="ECO:0007669"/>
    <property type="project" value="UniProtKB-SubCell"/>
</dbReference>
<dbReference type="GO" id="GO:0015179">
    <property type="term" value="F:L-amino acid transmembrane transporter activity"/>
    <property type="evidence" value="ECO:0007669"/>
    <property type="project" value="TreeGrafter"/>
</dbReference>
<dbReference type="Gene3D" id="1.20.1740.10">
    <property type="entry name" value="Amino acid/polyamine transporter I"/>
    <property type="match status" value="1"/>
</dbReference>
<dbReference type="InterPro" id="IPR002293">
    <property type="entry name" value="AA/rel_permease1"/>
</dbReference>
<dbReference type="InterPro" id="IPR050598">
    <property type="entry name" value="AminoAcid_Transporter"/>
</dbReference>
<dbReference type="PANTHER" id="PTHR11785">
    <property type="entry name" value="AMINO ACID TRANSPORTER"/>
    <property type="match status" value="1"/>
</dbReference>
<dbReference type="PANTHER" id="PTHR11785:SF512">
    <property type="entry name" value="SOBREMESA, ISOFORM B"/>
    <property type="match status" value="1"/>
</dbReference>
<dbReference type="Pfam" id="PF13520">
    <property type="entry name" value="AA_permease_2"/>
    <property type="match status" value="1"/>
</dbReference>
<dbReference type="PIRSF" id="PIRSF006060">
    <property type="entry name" value="AA_transporter"/>
    <property type="match status" value="1"/>
</dbReference>
<feature type="chain" id="PRO_0000210659" description="Uncharacterized protein MPN_308">
    <location>
        <begin position="1"/>
        <end position="565"/>
    </location>
</feature>
<feature type="transmembrane region" description="Helical" evidence="1">
    <location>
        <begin position="8"/>
        <end position="28"/>
    </location>
</feature>
<feature type="transmembrane region" description="Helical" evidence="1">
    <location>
        <begin position="43"/>
        <end position="63"/>
    </location>
</feature>
<feature type="transmembrane region" description="Helical" evidence="1">
    <location>
        <begin position="95"/>
        <end position="115"/>
    </location>
</feature>
<feature type="transmembrane region" description="Helical" evidence="1">
    <location>
        <begin position="137"/>
        <end position="157"/>
    </location>
</feature>
<feature type="transmembrane region" description="Helical" evidence="1">
    <location>
        <begin position="167"/>
        <end position="187"/>
    </location>
</feature>
<feature type="transmembrane region" description="Helical" evidence="1">
    <location>
        <begin position="227"/>
        <end position="247"/>
    </location>
</feature>
<feature type="transmembrane region" description="Helical" evidence="1">
    <location>
        <begin position="268"/>
        <end position="288"/>
    </location>
</feature>
<feature type="transmembrane region" description="Helical" evidence="1">
    <location>
        <begin position="314"/>
        <end position="334"/>
    </location>
</feature>
<feature type="transmembrane region" description="Helical" evidence="1">
    <location>
        <begin position="367"/>
        <end position="387"/>
    </location>
</feature>
<feature type="transmembrane region" description="Helical" evidence="1">
    <location>
        <begin position="424"/>
        <end position="444"/>
    </location>
</feature>
<feature type="transmembrane region" description="Helical" evidence="1">
    <location>
        <begin position="460"/>
        <end position="480"/>
    </location>
</feature>
<feature type="transmembrane region" description="Helical" evidence="1">
    <location>
        <begin position="482"/>
        <end position="502"/>
    </location>
</feature>
<feature type="transmembrane region" description="Helical" evidence="1">
    <location>
        <begin position="516"/>
        <end position="536"/>
    </location>
</feature>
<reference key="1">
    <citation type="journal article" date="1996" name="Nucleic Acids Res.">
        <title>Complete sequence analysis of the genome of the bacterium Mycoplasma pneumoniae.</title>
        <authorList>
            <person name="Himmelreich R."/>
            <person name="Hilbert H."/>
            <person name="Plagens H."/>
            <person name="Pirkl E."/>
            <person name="Li B.-C."/>
            <person name="Herrmann R."/>
        </authorList>
    </citation>
    <scope>NUCLEOTIDE SEQUENCE [LARGE SCALE GENOMIC DNA]</scope>
    <source>
        <strain>ATCC 29342 / M129 / Subtype 1</strain>
    </source>
</reference>
<reference key="2">
    <citation type="journal article" date="1997" name="J. Bacteriol.">
        <title>Transposon mutagenesis reinforces the correlation between Mycoplasma pneumoniae cytoskeletal protein HMW2 and cytadherence.</title>
        <authorList>
            <person name="Krause D.C."/>
            <person name="Proft T."/>
            <person name="Hedreyda C.T."/>
            <person name="Hilbert H."/>
            <person name="Plagens H."/>
            <person name="Herrmann R."/>
        </authorList>
    </citation>
    <scope>NUCLEOTIDE SEQUENCE [GENOMIC DNA]</scope>
    <source>
        <strain>ATCC 29342 / M129 / Subtype 1</strain>
    </source>
</reference>
<gene>
    <name type="ordered locus">MPN_308</name>
    <name type="ORF">F10_orf565</name>
    <name type="ORF">MP528</name>
</gene>
<organism>
    <name type="scientific">Mycoplasma pneumoniae (strain ATCC 29342 / M129 / Subtype 1)</name>
    <name type="common">Mycoplasmoides pneumoniae</name>
    <dbReference type="NCBI Taxonomy" id="272634"/>
    <lineage>
        <taxon>Bacteria</taxon>
        <taxon>Bacillati</taxon>
        <taxon>Mycoplasmatota</taxon>
        <taxon>Mycoplasmoidales</taxon>
        <taxon>Mycoplasmoidaceae</taxon>
        <taxon>Mycoplasmoides</taxon>
    </lineage>
</organism>
<keyword id="KW-1003">Cell membrane</keyword>
<keyword id="KW-0472">Membrane</keyword>
<keyword id="KW-1185">Reference proteome</keyword>
<keyword id="KW-0812">Transmembrane</keyword>
<keyword id="KW-1133">Transmembrane helix</keyword>
<accession>P75472</accession>
<accession>O08088</accession>